<reference key="1">
    <citation type="submission" date="2007-03" db="EMBL/GenBank/DDBJ databases">
        <title>Complete sequence of chromosome of Methanococcus maripaludis C5.</title>
        <authorList>
            <consortium name="US DOE Joint Genome Institute"/>
            <person name="Copeland A."/>
            <person name="Lucas S."/>
            <person name="Lapidus A."/>
            <person name="Barry K."/>
            <person name="Glavina del Rio T."/>
            <person name="Dalin E."/>
            <person name="Tice H."/>
            <person name="Pitluck S."/>
            <person name="Chertkov O."/>
            <person name="Brettin T."/>
            <person name="Bruce D."/>
            <person name="Han C."/>
            <person name="Detter J.C."/>
            <person name="Schmutz J."/>
            <person name="Larimer F."/>
            <person name="Land M."/>
            <person name="Hauser L."/>
            <person name="Kyrpides N."/>
            <person name="Mikhailova N."/>
            <person name="Sieprawska-Lupa M."/>
            <person name="Whitman W.B."/>
            <person name="Richardson P."/>
        </authorList>
    </citation>
    <scope>NUCLEOTIDE SEQUENCE [LARGE SCALE GENOMIC DNA]</scope>
    <source>
        <strain>C5 / ATCC BAA-1333</strain>
    </source>
</reference>
<evidence type="ECO:0000255" key="1">
    <source>
        <dbReference type="HAMAP-Rule" id="MF_01078"/>
    </source>
</evidence>
<comment type="function">
    <text evidence="1">RNA-free RNase P that catalyzes the removal of the 5'-leader sequence from pre-tRNA to produce the mature 5'-terminus.</text>
</comment>
<comment type="catalytic activity">
    <reaction evidence="1">
        <text>Endonucleolytic cleavage of RNA, removing 5'-extranucleotides from tRNA precursor.</text>
        <dbReference type="EC" id="3.1.26.5"/>
    </reaction>
</comment>
<comment type="similarity">
    <text evidence="1">Belongs to the HARP family.</text>
</comment>
<feature type="chain" id="PRO_1000064800" description="RNA-free ribonuclease P">
    <location>
        <begin position="1"/>
        <end position="223"/>
    </location>
</feature>
<organism>
    <name type="scientific">Methanococcus maripaludis (strain C5 / ATCC BAA-1333)</name>
    <dbReference type="NCBI Taxonomy" id="402880"/>
    <lineage>
        <taxon>Archaea</taxon>
        <taxon>Methanobacteriati</taxon>
        <taxon>Methanobacteriota</taxon>
        <taxon>Methanomada group</taxon>
        <taxon>Methanococci</taxon>
        <taxon>Methanococcales</taxon>
        <taxon>Methanococcaceae</taxon>
        <taxon>Methanococcus</taxon>
    </lineage>
</organism>
<name>RFRNP_METM5</name>
<proteinExistence type="inferred from homology"/>
<keyword id="KW-0255">Endonuclease</keyword>
<keyword id="KW-0378">Hydrolase</keyword>
<keyword id="KW-0540">Nuclease</keyword>
<keyword id="KW-0819">tRNA processing</keyword>
<protein>
    <recommendedName>
        <fullName evidence="1">RNA-free ribonuclease P</fullName>
        <shortName evidence="1">RNA-free RNase P</shortName>
        <ecNumber evidence="1">3.1.26.5</ecNumber>
    </recommendedName>
    <alternativeName>
        <fullName evidence="1">Protein-only RNase P</fullName>
    </alternativeName>
</protein>
<dbReference type="EC" id="3.1.26.5" evidence="1"/>
<dbReference type="EMBL" id="CP000609">
    <property type="protein sequence ID" value="ABO34423.1"/>
    <property type="molecule type" value="Genomic_DNA"/>
</dbReference>
<dbReference type="RefSeq" id="WP_011867883.1">
    <property type="nucleotide sequence ID" value="NC_009135.1"/>
</dbReference>
<dbReference type="SMR" id="A4FW52"/>
<dbReference type="STRING" id="402880.MmarC5_0106"/>
<dbReference type="GeneID" id="4927568"/>
<dbReference type="KEGG" id="mmq:MmarC5_0106"/>
<dbReference type="eggNOG" id="arCOG00720">
    <property type="taxonomic scope" value="Archaea"/>
</dbReference>
<dbReference type="HOGENOM" id="CLU_109672_0_0_2"/>
<dbReference type="OrthoDB" id="95197at2157"/>
<dbReference type="Proteomes" id="UP000000253">
    <property type="component" value="Chromosome"/>
</dbReference>
<dbReference type="GO" id="GO:0004526">
    <property type="term" value="F:ribonuclease P activity"/>
    <property type="evidence" value="ECO:0007669"/>
    <property type="project" value="UniProtKB-UniRule"/>
</dbReference>
<dbReference type="GO" id="GO:0001682">
    <property type="term" value="P:tRNA 5'-leader removal"/>
    <property type="evidence" value="ECO:0007669"/>
    <property type="project" value="UniProtKB-UniRule"/>
</dbReference>
<dbReference type="CDD" id="cd18691">
    <property type="entry name" value="PIN_VapC-like"/>
    <property type="match status" value="1"/>
</dbReference>
<dbReference type="HAMAP" id="MF_01078">
    <property type="entry name" value="RNA_free_RNase_P"/>
    <property type="match status" value="1"/>
</dbReference>
<dbReference type="InterPro" id="IPR014856">
    <property type="entry name" value="RNA_free_RNase_P"/>
</dbReference>
<dbReference type="NCBIfam" id="NF003340">
    <property type="entry name" value="PRK04358.1-1"/>
    <property type="match status" value="1"/>
</dbReference>
<dbReference type="NCBIfam" id="NF003343">
    <property type="entry name" value="PRK04358.1-4"/>
    <property type="match status" value="1"/>
</dbReference>
<dbReference type="NCBIfam" id="TIGR03875">
    <property type="entry name" value="RNA_lig_partner"/>
    <property type="match status" value="1"/>
</dbReference>
<dbReference type="PANTHER" id="PTHR41173:SF1">
    <property type="entry name" value="RNA-FREE RIBONUCLEASE P"/>
    <property type="match status" value="1"/>
</dbReference>
<dbReference type="PANTHER" id="PTHR41173">
    <property type="entry name" value="UPF0278 PROTEIN TK1425"/>
    <property type="match status" value="1"/>
</dbReference>
<dbReference type="Pfam" id="PF08745">
    <property type="entry name" value="PIN_5"/>
    <property type="match status" value="1"/>
</dbReference>
<gene>
    <name type="ordered locus">MmarC5_0106</name>
</gene>
<accession>A4FW52</accession>
<sequence>MQKQRFCLDTTAITDSDVRKSLGVSNISESAEKIMDIIAQARVQLDISCHIPYNTVYKELIGFLVREECAPETLIKVNTWLVKKTPNRYEIKIPAEIFYEYIKDLRERINKGMRISENAMYETALEAYILSKPDEKDREDVLNEVLSKTVNSFRDKYRNTLRGGTLDSAPDLDVLLLAKELDAAVVANDEGIEKWAQRLGLRFVNARDFPFIIQEYLDLWDKK</sequence>